<feature type="chain" id="PRO_0000199363" description="Formate--tetrahydrofolate ligase">
    <location>
        <begin position="1"/>
        <end position="558"/>
    </location>
</feature>
<feature type="binding site" evidence="1">
    <location>
        <begin position="66"/>
        <end position="73"/>
    </location>
    <ligand>
        <name>ATP</name>
        <dbReference type="ChEBI" id="CHEBI:30616"/>
    </ligand>
</feature>
<proteinExistence type="inferred from homology"/>
<dbReference type="EC" id="6.3.4.3" evidence="1"/>
<dbReference type="EMBL" id="AE004969">
    <property type="protein sequence ID" value="AAW88826.1"/>
    <property type="molecule type" value="Genomic_DNA"/>
</dbReference>
<dbReference type="RefSeq" id="WP_003698015.1">
    <property type="nucleotide sequence ID" value="NC_002946.2"/>
</dbReference>
<dbReference type="RefSeq" id="YP_207238.1">
    <property type="nucleotide sequence ID" value="NC_002946.2"/>
</dbReference>
<dbReference type="SMR" id="Q5FAG1"/>
<dbReference type="STRING" id="242231.NGO_0062"/>
<dbReference type="KEGG" id="ngo:NGO_0062"/>
<dbReference type="PATRIC" id="fig|242231.10.peg.72"/>
<dbReference type="HOGENOM" id="CLU_003601_3_3_4"/>
<dbReference type="UniPathway" id="UPA00193"/>
<dbReference type="Proteomes" id="UP000000535">
    <property type="component" value="Chromosome"/>
</dbReference>
<dbReference type="GO" id="GO:0005524">
    <property type="term" value="F:ATP binding"/>
    <property type="evidence" value="ECO:0007669"/>
    <property type="project" value="UniProtKB-UniRule"/>
</dbReference>
<dbReference type="GO" id="GO:0004329">
    <property type="term" value="F:formate-tetrahydrofolate ligase activity"/>
    <property type="evidence" value="ECO:0007669"/>
    <property type="project" value="UniProtKB-UniRule"/>
</dbReference>
<dbReference type="GO" id="GO:0035999">
    <property type="term" value="P:tetrahydrofolate interconversion"/>
    <property type="evidence" value="ECO:0007669"/>
    <property type="project" value="UniProtKB-UniRule"/>
</dbReference>
<dbReference type="CDD" id="cd00477">
    <property type="entry name" value="FTHFS"/>
    <property type="match status" value="1"/>
</dbReference>
<dbReference type="FunFam" id="3.30.1510.10:FF:000001">
    <property type="entry name" value="Formate--tetrahydrofolate ligase"/>
    <property type="match status" value="1"/>
</dbReference>
<dbReference type="FunFam" id="3.10.410.10:FF:000001">
    <property type="entry name" value="Putative formate--tetrahydrofolate ligase"/>
    <property type="match status" value="1"/>
</dbReference>
<dbReference type="Gene3D" id="3.30.1510.10">
    <property type="entry name" value="Domain 2, N(10)-formyltetrahydrofolate synthetase"/>
    <property type="match status" value="1"/>
</dbReference>
<dbReference type="Gene3D" id="3.10.410.10">
    <property type="entry name" value="Formyltetrahydrofolate synthetase, domain 3"/>
    <property type="match status" value="1"/>
</dbReference>
<dbReference type="Gene3D" id="3.40.50.300">
    <property type="entry name" value="P-loop containing nucleotide triphosphate hydrolases"/>
    <property type="match status" value="1"/>
</dbReference>
<dbReference type="HAMAP" id="MF_01543">
    <property type="entry name" value="FTHFS"/>
    <property type="match status" value="1"/>
</dbReference>
<dbReference type="InterPro" id="IPR000559">
    <property type="entry name" value="Formate_THF_ligase"/>
</dbReference>
<dbReference type="InterPro" id="IPR020628">
    <property type="entry name" value="Formate_THF_ligase_CS"/>
</dbReference>
<dbReference type="InterPro" id="IPR027417">
    <property type="entry name" value="P-loop_NTPase"/>
</dbReference>
<dbReference type="NCBIfam" id="NF010030">
    <property type="entry name" value="PRK13505.1"/>
    <property type="match status" value="1"/>
</dbReference>
<dbReference type="Pfam" id="PF01268">
    <property type="entry name" value="FTHFS"/>
    <property type="match status" value="1"/>
</dbReference>
<dbReference type="SUPFAM" id="SSF52540">
    <property type="entry name" value="P-loop containing nucleoside triphosphate hydrolases"/>
    <property type="match status" value="1"/>
</dbReference>
<dbReference type="PROSITE" id="PS00721">
    <property type="entry name" value="FTHFS_1"/>
    <property type="match status" value="1"/>
</dbReference>
<dbReference type="PROSITE" id="PS00722">
    <property type="entry name" value="FTHFS_2"/>
    <property type="match status" value="1"/>
</dbReference>
<accession>Q5FAG1</accession>
<protein>
    <recommendedName>
        <fullName evidence="1">Formate--tetrahydrofolate ligase</fullName>
        <ecNumber evidence="1">6.3.4.3</ecNumber>
    </recommendedName>
    <alternativeName>
        <fullName evidence="1">Formyltetrahydrofolate synthetase</fullName>
        <shortName evidence="1">FHS</shortName>
        <shortName evidence="1">FTHFS</shortName>
    </alternativeName>
</protein>
<keyword id="KW-0067">ATP-binding</keyword>
<keyword id="KW-0436">Ligase</keyword>
<keyword id="KW-0547">Nucleotide-binding</keyword>
<keyword id="KW-0554">One-carbon metabolism</keyword>
<keyword id="KW-1185">Reference proteome</keyword>
<organism>
    <name type="scientific">Neisseria gonorrhoeae (strain ATCC 700825 / FA 1090)</name>
    <dbReference type="NCBI Taxonomy" id="242231"/>
    <lineage>
        <taxon>Bacteria</taxon>
        <taxon>Pseudomonadati</taxon>
        <taxon>Pseudomonadota</taxon>
        <taxon>Betaproteobacteria</taxon>
        <taxon>Neisseriales</taxon>
        <taxon>Neisseriaceae</taxon>
        <taxon>Neisseria</taxon>
    </lineage>
</organism>
<evidence type="ECO:0000255" key="1">
    <source>
        <dbReference type="HAMAP-Rule" id="MF_01543"/>
    </source>
</evidence>
<reference key="1">
    <citation type="submission" date="2003-03" db="EMBL/GenBank/DDBJ databases">
        <title>The complete genome sequence of Neisseria gonorrhoeae.</title>
        <authorList>
            <person name="Lewis L.A."/>
            <person name="Gillaspy A.F."/>
            <person name="McLaughlin R.E."/>
            <person name="Gipson M."/>
            <person name="Ducey T.F."/>
            <person name="Ownbey T."/>
            <person name="Hartman K."/>
            <person name="Nydick C."/>
            <person name="Carson M.B."/>
            <person name="Vaughn J."/>
            <person name="Thomson C."/>
            <person name="Song L."/>
            <person name="Lin S."/>
            <person name="Yuan X."/>
            <person name="Najar F."/>
            <person name="Zhan M."/>
            <person name="Ren Q."/>
            <person name="Zhu H."/>
            <person name="Qi S."/>
            <person name="Kenton S.M."/>
            <person name="Lai H."/>
            <person name="White J.D."/>
            <person name="Clifton S."/>
            <person name="Roe B.A."/>
            <person name="Dyer D.W."/>
        </authorList>
    </citation>
    <scope>NUCLEOTIDE SEQUENCE [LARGE SCALE GENOMIC DNA]</scope>
    <source>
        <strain>ATCC 700825 / FA 1090</strain>
    </source>
</reference>
<sequence>MSFKTDAETAQSSTMRPIGEIAAKLGLNVDNIEPYGHYKAKINPAEAFKLPQKQGRLILVTAINPTPAGEGKTTVTIGLADALRHIGKDSVIALREPSLGPVFGVKGGAAGGGYAQVLPMEDINLHFTGDFHAIGAANNLLAAMLDNHIYQGNELNIDPKRVLWRRVVDMNDRQLRNIIDGMGKPVDGVMRPDGFDITVASEVMAVFCLAKDISDLKERFGNILVAYAKDGSPVYAKDLKAHGAMAALLKDAIKPNLVQTIEGTPAFVHGGPFANIAHGCNSVTATRLAKHLADYAVTEAGFGADLGAEKFCDIKCRLAGLKPDAAVVVATVRALKYNGGVERANLGEENLEALAKGLPNLLKHISNLKNVFGLPVVVALNRFVSDSDAELAMIEKACAEHGVEVSLTEVWGKGGAGGADLARKVVNAIDNQPNNFGFAYDVELGIKDKIRAIAQKVYGAEDVDFSAEASAEIASLEKLGLDKMPICMAKTQYSLSDNAKLLGCPEGFRIAVRGITVSAGAGFIVALCGNMMKMPGLPKVPAAEKIDVDEHGVIHGLF</sequence>
<gene>
    <name evidence="1" type="primary">fhs</name>
    <name type="ordered locus">NGO_0062</name>
</gene>
<comment type="catalytic activity">
    <reaction evidence="1">
        <text>(6S)-5,6,7,8-tetrahydrofolate + formate + ATP = (6R)-10-formyltetrahydrofolate + ADP + phosphate</text>
        <dbReference type="Rhea" id="RHEA:20221"/>
        <dbReference type="ChEBI" id="CHEBI:15740"/>
        <dbReference type="ChEBI" id="CHEBI:30616"/>
        <dbReference type="ChEBI" id="CHEBI:43474"/>
        <dbReference type="ChEBI" id="CHEBI:57453"/>
        <dbReference type="ChEBI" id="CHEBI:195366"/>
        <dbReference type="ChEBI" id="CHEBI:456216"/>
        <dbReference type="EC" id="6.3.4.3"/>
    </reaction>
</comment>
<comment type="pathway">
    <text evidence="1">One-carbon metabolism; tetrahydrofolate interconversion.</text>
</comment>
<comment type="similarity">
    <text evidence="1">Belongs to the formate--tetrahydrofolate ligase family.</text>
</comment>
<name>FTHS_NEIG1</name>